<evidence type="ECO:0000250" key="1">
    <source>
        <dbReference type="UniProtKB" id="Q89424"/>
    </source>
</evidence>
<evidence type="ECO:0000255" key="2"/>
<evidence type="ECO:0000256" key="3">
    <source>
        <dbReference type="SAM" id="MobiDB-lite"/>
    </source>
</evidence>
<evidence type="ECO:0000305" key="4"/>
<sequence>MDTETSPLLSHNLSTREGIKQSTQGLLAHTIAKYPGTTAILLGILILLVIILIIVAIVYYNRAVDCKSSMPKPPPSYYVQQPEPHHHFPVFFRKRKNSTSQQSHIPSDEQLAELAHS</sequence>
<organism>
    <name type="scientific">African swine fever virus (isolate Warthog/Namibia/Wart80/1980)</name>
    <name type="common">ASFV</name>
    <dbReference type="NCBI Taxonomy" id="561444"/>
    <lineage>
        <taxon>Viruses</taxon>
        <taxon>Varidnaviria</taxon>
        <taxon>Bamfordvirae</taxon>
        <taxon>Nucleocytoviricota</taxon>
        <taxon>Pokkesviricetes</taxon>
        <taxon>Asfuvirales</taxon>
        <taxon>Asfarviridae</taxon>
        <taxon>Asfivirus</taxon>
        <taxon>African swine fever virus</taxon>
    </lineage>
</organism>
<keyword id="KW-0325">Glycoprotein</keyword>
<keyword id="KW-1038">Host endoplasmic reticulum</keyword>
<keyword id="KW-1043">Host membrane</keyword>
<keyword id="KW-0945">Host-virus interaction</keyword>
<keyword id="KW-1090">Inhibition of host innate immune response by virus</keyword>
<keyword id="KW-0472">Membrane</keyword>
<keyword id="KW-0812">Transmembrane</keyword>
<keyword id="KW-1133">Transmembrane helix</keyword>
<keyword id="KW-0899">Viral immunoevasion</keyword>
<keyword id="KW-0946">Virion</keyword>
<dbReference type="EMBL" id="AY261366">
    <property type="status" value="NOT_ANNOTATED_CDS"/>
    <property type="molecule type" value="Genomic_DNA"/>
</dbReference>
<dbReference type="SMR" id="P0C9Z0"/>
<dbReference type="Proteomes" id="UP000000858">
    <property type="component" value="Segment"/>
</dbReference>
<dbReference type="GO" id="GO:0044167">
    <property type="term" value="C:host cell endoplasmic reticulum membrane"/>
    <property type="evidence" value="ECO:0007669"/>
    <property type="project" value="UniProtKB-SubCell"/>
</dbReference>
<dbReference type="GO" id="GO:0016020">
    <property type="term" value="C:membrane"/>
    <property type="evidence" value="ECO:0007669"/>
    <property type="project" value="UniProtKB-KW"/>
</dbReference>
<dbReference type="GO" id="GO:0055036">
    <property type="term" value="C:virion membrane"/>
    <property type="evidence" value="ECO:0007669"/>
    <property type="project" value="UniProtKB-SubCell"/>
</dbReference>
<dbReference type="GO" id="GO:0052170">
    <property type="term" value="P:symbiont-mediated suppression of host innate immune response"/>
    <property type="evidence" value="ECO:0007669"/>
    <property type="project" value="UniProtKB-KW"/>
</dbReference>
<protein>
    <recommendedName>
        <fullName evidence="1">Minor capsid protein p17</fullName>
    </recommendedName>
</protein>
<organismHost>
    <name type="scientific">Ornithodoros</name>
    <name type="common">relapsing fever ticks</name>
    <dbReference type="NCBI Taxonomy" id="6937"/>
</organismHost>
<organismHost>
    <name type="scientific">Phacochoerus aethiopicus</name>
    <name type="common">Warthog</name>
    <dbReference type="NCBI Taxonomy" id="85517"/>
</organismHost>
<organismHost>
    <name type="scientific">Phacochoerus africanus</name>
    <name type="common">Warthog</name>
    <dbReference type="NCBI Taxonomy" id="41426"/>
</organismHost>
<organismHost>
    <name type="scientific">Potamochoerus larvatus</name>
    <name type="common">Bushpig</name>
    <dbReference type="NCBI Taxonomy" id="273792"/>
</organismHost>
<organismHost>
    <name type="scientific">Sus scrofa</name>
    <name type="common">Pig</name>
    <dbReference type="NCBI Taxonomy" id="9823"/>
</organismHost>
<accession>P0C9Z0</accession>
<reference key="1">
    <citation type="submission" date="2003-03" db="EMBL/GenBank/DDBJ databases">
        <title>African swine fever virus genomes.</title>
        <authorList>
            <person name="Kutish G.F."/>
            <person name="Rock D.L."/>
        </authorList>
    </citation>
    <scope>NUCLEOTIDE SEQUENCE [LARGE SCALE GENOMIC DNA]</scope>
</reference>
<feature type="chain" id="PRO_0000373405" description="Minor capsid protein p17">
    <location>
        <begin position="1"/>
        <end position="117"/>
    </location>
</feature>
<feature type="transmembrane region" description="Helical" evidence="2">
    <location>
        <begin position="39"/>
        <end position="59"/>
    </location>
</feature>
<feature type="region of interest" description="Disordered" evidence="3">
    <location>
        <begin position="96"/>
        <end position="117"/>
    </location>
</feature>
<feature type="glycosylation site" description="N-linked (GlcNAc...) asparagine; by host" evidence="2">
    <location>
        <position position="12"/>
    </location>
</feature>
<feature type="glycosylation site" description="N-linked (GlcNAc...) asparagine; by host" evidence="2">
    <location>
        <position position="97"/>
    </location>
</feature>
<gene>
    <name type="ordered locus">War-117</name>
</gene>
<proteinExistence type="inferred from homology"/>
<name>P17_ASFWA</name>
<comment type="function">
    <text evidence="1">Together with the penton and the other minor capsid proteins (M1249L, p49), forms a complicated network immediately below the outer capsid shell, stabilizing the whole capsid. Three copies of p17 encircle each p72 capsomer in the inner capsid shell, anchoring p72 capsomers on the inner membrane. Required for the assembly of the capsid and icosahedral morphogenesis. Additionally, inhibits the host cGAS-STING pathway through its interaction with STING1 and subsequent interference of the recruitment of downstream components TBK1 and IKBKE.</text>
</comment>
<comment type="subunit">
    <text evidence="1">Interacts with the minor capsid protein M1249L and with the hexon capsid protein p72 capsomers; these interactions form a rigid zipper structure that stabilizes the capsomers. Interacts with host STING1.</text>
</comment>
<comment type="subcellular location">
    <subcellularLocation>
        <location evidence="1">Virion membrane</location>
        <topology evidence="2">Single-pass membrane protein</topology>
    </subcellularLocation>
    <subcellularLocation>
        <location evidence="1">Host endoplasmic reticulum membrane</location>
        <topology evidence="2">Single-pass membrane protein</topology>
    </subcellularLocation>
    <text>Found in the inner envelope of the virus.</text>
</comment>
<comment type="induction">
    <text evidence="4">Expressed in the late phase of the viral replicative cycle.</text>
</comment>
<comment type="similarity">
    <text evidence="4">Belongs to the asfivirus minor capsid protein p17 family.</text>
</comment>